<geneLocation type="chloroplast"/>
<dbReference type="EC" id="2.7.7.6" evidence="1"/>
<dbReference type="EMBL" id="DQ345959">
    <property type="protein sequence ID" value="ABC73659.1"/>
    <property type="molecule type" value="Genomic_DNA"/>
</dbReference>
<dbReference type="RefSeq" id="XP_016719333.1">
    <property type="nucleotide sequence ID" value="XM_016863844.1"/>
</dbReference>
<dbReference type="RefSeq" id="XP_016719353.1">
    <property type="nucleotide sequence ID" value="XM_016863864.1"/>
</dbReference>
<dbReference type="RefSeq" id="XP_016719354.1">
    <property type="nucleotide sequence ID" value="XM_016863865.1"/>
</dbReference>
<dbReference type="RefSeq" id="YP_538968.1">
    <property type="nucleotide sequence ID" value="NC_007944.1"/>
</dbReference>
<dbReference type="SMR" id="Q2L938"/>
<dbReference type="GeneID" id="3989136"/>
<dbReference type="KEGG" id="ghi:3989136"/>
<dbReference type="OrthoDB" id="34444at41938"/>
<dbReference type="Proteomes" id="UP000189702">
    <property type="component" value="Chloroplast Pltd"/>
</dbReference>
<dbReference type="GO" id="GO:0009507">
    <property type="term" value="C:chloroplast"/>
    <property type="evidence" value="ECO:0007669"/>
    <property type="project" value="UniProtKB-SubCell"/>
</dbReference>
<dbReference type="GO" id="GO:0000428">
    <property type="term" value="C:DNA-directed RNA polymerase complex"/>
    <property type="evidence" value="ECO:0007669"/>
    <property type="project" value="UniProtKB-KW"/>
</dbReference>
<dbReference type="GO" id="GO:0005739">
    <property type="term" value="C:mitochondrion"/>
    <property type="evidence" value="ECO:0007669"/>
    <property type="project" value="GOC"/>
</dbReference>
<dbReference type="GO" id="GO:0003677">
    <property type="term" value="F:DNA binding"/>
    <property type="evidence" value="ECO:0007669"/>
    <property type="project" value="UniProtKB-UniRule"/>
</dbReference>
<dbReference type="GO" id="GO:0003899">
    <property type="term" value="F:DNA-directed RNA polymerase activity"/>
    <property type="evidence" value="ECO:0007669"/>
    <property type="project" value="UniProtKB-UniRule"/>
</dbReference>
<dbReference type="GO" id="GO:0046983">
    <property type="term" value="F:protein dimerization activity"/>
    <property type="evidence" value="ECO:0007669"/>
    <property type="project" value="InterPro"/>
</dbReference>
<dbReference type="GO" id="GO:0006351">
    <property type="term" value="P:DNA-templated transcription"/>
    <property type="evidence" value="ECO:0007669"/>
    <property type="project" value="UniProtKB-UniRule"/>
</dbReference>
<dbReference type="CDD" id="cd06928">
    <property type="entry name" value="RNAP_alpha_NTD"/>
    <property type="match status" value="1"/>
</dbReference>
<dbReference type="FunFam" id="1.10.150.20:FF:000021">
    <property type="entry name" value="DNA-directed RNA polymerase subunit alpha"/>
    <property type="match status" value="1"/>
</dbReference>
<dbReference type="FunFam" id="2.170.120.12:FF:000001">
    <property type="entry name" value="DNA-directed RNA polymerase subunit alpha"/>
    <property type="match status" value="1"/>
</dbReference>
<dbReference type="FunFam" id="3.30.1360.10:FF:000039">
    <property type="entry name" value="DNA-directed RNA polymerase subunit alpha"/>
    <property type="match status" value="1"/>
</dbReference>
<dbReference type="Gene3D" id="1.10.150.20">
    <property type="entry name" value="5' to 3' exonuclease, C-terminal subdomain"/>
    <property type="match status" value="1"/>
</dbReference>
<dbReference type="Gene3D" id="2.170.120.12">
    <property type="entry name" value="DNA-directed RNA polymerase, insert domain"/>
    <property type="match status" value="1"/>
</dbReference>
<dbReference type="Gene3D" id="3.30.1360.10">
    <property type="entry name" value="RNA polymerase, RBP11-like subunit"/>
    <property type="match status" value="1"/>
</dbReference>
<dbReference type="HAMAP" id="MF_00059">
    <property type="entry name" value="RNApol_bact_RpoA"/>
    <property type="match status" value="1"/>
</dbReference>
<dbReference type="InterPro" id="IPR011262">
    <property type="entry name" value="DNA-dir_RNA_pol_insert"/>
</dbReference>
<dbReference type="InterPro" id="IPR011263">
    <property type="entry name" value="DNA-dir_RNA_pol_RpoA/D/Rpb3"/>
</dbReference>
<dbReference type="InterPro" id="IPR011773">
    <property type="entry name" value="DNA-dir_RpoA"/>
</dbReference>
<dbReference type="InterPro" id="IPR036603">
    <property type="entry name" value="RBP11-like"/>
</dbReference>
<dbReference type="InterPro" id="IPR011260">
    <property type="entry name" value="RNAP_asu_C"/>
</dbReference>
<dbReference type="InterPro" id="IPR036643">
    <property type="entry name" value="RNApol_insert_sf"/>
</dbReference>
<dbReference type="NCBIfam" id="TIGR02027">
    <property type="entry name" value="rpoA"/>
    <property type="match status" value="1"/>
</dbReference>
<dbReference type="Pfam" id="PF01000">
    <property type="entry name" value="RNA_pol_A_bac"/>
    <property type="match status" value="1"/>
</dbReference>
<dbReference type="Pfam" id="PF03118">
    <property type="entry name" value="RNA_pol_A_CTD"/>
    <property type="match status" value="1"/>
</dbReference>
<dbReference type="Pfam" id="PF01193">
    <property type="entry name" value="RNA_pol_L"/>
    <property type="match status" value="1"/>
</dbReference>
<dbReference type="SMART" id="SM00662">
    <property type="entry name" value="RPOLD"/>
    <property type="match status" value="1"/>
</dbReference>
<dbReference type="SUPFAM" id="SSF47789">
    <property type="entry name" value="C-terminal domain of RNA polymerase alpha subunit"/>
    <property type="match status" value="1"/>
</dbReference>
<dbReference type="SUPFAM" id="SSF56553">
    <property type="entry name" value="Insert subdomain of RNA polymerase alpha subunit"/>
    <property type="match status" value="1"/>
</dbReference>
<dbReference type="SUPFAM" id="SSF55257">
    <property type="entry name" value="RBP11-like subunits of RNA polymerase"/>
    <property type="match status" value="1"/>
</dbReference>
<accession>Q2L938</accession>
<feature type="chain" id="PRO_0000236288" description="DNA-directed RNA polymerase subunit alpha">
    <location>
        <begin position="1"/>
        <end position="329"/>
    </location>
</feature>
<feature type="region of interest" description="Alpha N-terminal domain (alpha-NTD)" evidence="1">
    <location>
        <begin position="1"/>
        <end position="235"/>
    </location>
</feature>
<feature type="region of interest" description="Alpha C-terminal domain (alpha-CTD)" evidence="1">
    <location>
        <begin position="269"/>
        <end position="329"/>
    </location>
</feature>
<keyword id="KW-0150">Chloroplast</keyword>
<keyword id="KW-0240">DNA-directed RNA polymerase</keyword>
<keyword id="KW-0548">Nucleotidyltransferase</keyword>
<keyword id="KW-0934">Plastid</keyword>
<keyword id="KW-1185">Reference proteome</keyword>
<keyword id="KW-0804">Transcription</keyword>
<keyword id="KW-0808">Transferase</keyword>
<gene>
    <name evidence="1" type="primary">rpoA</name>
</gene>
<sequence length="329" mass="37844">MVREKVKVSTSTRTRQWKCVESRTDSKRLYYGRFILSPLMKGQADTIGIAMRRALLGELEGTCITRAKSEKIPHEYSTIVGIQESVHEILMNLKEIVLRGNLYGTRNAFICAKGPGYVTAQDIILPPSVEIVDNTQHVASLTEPIDLCIGLQIERNRGYGIKTPKNFHDGSYPIDAVFMPVRNANHSIHCYGNDNEKQEILFLEIWTNGSLTPKEALHEASRNLIDLFIPFLHTEEENLHLENNQHDVTLPFFPFHDRLVKLTKKKKEIALKYIFIDQSELPPRIYNCLKKSNIHTLLDLLNNSREDLMKIEHFRIEDVKQILGILEKK</sequence>
<proteinExistence type="inferred from homology"/>
<reference key="1">
    <citation type="journal article" date="2006" name="BMC Genomics">
        <title>The complete chloroplast genome sequence of Gossypium hirsutum: organization and phylogenetic relationships to other angiosperms.</title>
        <authorList>
            <person name="Lee S.-B."/>
            <person name="Kaittanis C."/>
            <person name="Jansen R.K."/>
            <person name="Hostetler J.B."/>
            <person name="Tallon L.J."/>
            <person name="Town C.D."/>
            <person name="Daniell H."/>
        </authorList>
    </citation>
    <scope>NUCLEOTIDE SEQUENCE [LARGE SCALE GENOMIC DNA]</scope>
    <source>
        <strain>cv. Coker 310FR</strain>
    </source>
</reference>
<comment type="function">
    <text evidence="1">DNA-dependent RNA polymerase catalyzes the transcription of DNA into RNA using the four ribonucleoside triphosphates as substrates.</text>
</comment>
<comment type="catalytic activity">
    <reaction evidence="1">
        <text>RNA(n) + a ribonucleoside 5'-triphosphate = RNA(n+1) + diphosphate</text>
        <dbReference type="Rhea" id="RHEA:21248"/>
        <dbReference type="Rhea" id="RHEA-COMP:14527"/>
        <dbReference type="Rhea" id="RHEA-COMP:17342"/>
        <dbReference type="ChEBI" id="CHEBI:33019"/>
        <dbReference type="ChEBI" id="CHEBI:61557"/>
        <dbReference type="ChEBI" id="CHEBI:140395"/>
        <dbReference type="EC" id="2.7.7.6"/>
    </reaction>
</comment>
<comment type="subunit">
    <text evidence="1">In plastids the minimal PEP RNA polymerase catalytic core is composed of four subunits: alpha, beta, beta', and beta''. When a (nuclear-encoded) sigma factor is associated with the core the holoenzyme is formed, which can initiate transcription.</text>
</comment>
<comment type="subcellular location">
    <subcellularLocation>
        <location>Plastid</location>
        <location>Chloroplast</location>
    </subcellularLocation>
</comment>
<comment type="domain">
    <text evidence="1">The N-terminal domain is essential for RNAP assembly and basal transcription, whereas the C-terminal domain is involved in interaction with transcriptional regulators and with upstream promoter elements.</text>
</comment>
<comment type="similarity">
    <text evidence="1">Belongs to the RNA polymerase alpha chain family.</text>
</comment>
<protein>
    <recommendedName>
        <fullName evidence="1">DNA-directed RNA polymerase subunit alpha</fullName>
        <shortName evidence="1">PEP</shortName>
        <ecNumber evidence="1">2.7.7.6</ecNumber>
    </recommendedName>
    <alternativeName>
        <fullName evidence="1">Plastid-encoded RNA polymerase subunit alpha</fullName>
        <shortName evidence="1">RNA polymerase subunit alpha</shortName>
    </alternativeName>
</protein>
<name>RPOA_GOSHI</name>
<organism>
    <name type="scientific">Gossypium hirsutum</name>
    <name type="common">Upland cotton</name>
    <name type="synonym">Gossypium mexicanum</name>
    <dbReference type="NCBI Taxonomy" id="3635"/>
    <lineage>
        <taxon>Eukaryota</taxon>
        <taxon>Viridiplantae</taxon>
        <taxon>Streptophyta</taxon>
        <taxon>Embryophyta</taxon>
        <taxon>Tracheophyta</taxon>
        <taxon>Spermatophyta</taxon>
        <taxon>Magnoliopsida</taxon>
        <taxon>eudicotyledons</taxon>
        <taxon>Gunneridae</taxon>
        <taxon>Pentapetalae</taxon>
        <taxon>rosids</taxon>
        <taxon>malvids</taxon>
        <taxon>Malvales</taxon>
        <taxon>Malvaceae</taxon>
        <taxon>Malvoideae</taxon>
        <taxon>Gossypium</taxon>
    </lineage>
</organism>
<evidence type="ECO:0000255" key="1">
    <source>
        <dbReference type="HAMAP-Rule" id="MF_00059"/>
    </source>
</evidence>